<organism>
    <name type="scientific">Parvibaculum lavamentivorans (strain DS-1 / DSM 13023 / NCIMB 13966)</name>
    <dbReference type="NCBI Taxonomy" id="402881"/>
    <lineage>
        <taxon>Bacteria</taxon>
        <taxon>Pseudomonadati</taxon>
        <taxon>Pseudomonadota</taxon>
        <taxon>Alphaproteobacteria</taxon>
        <taxon>Hyphomicrobiales</taxon>
        <taxon>Parvibaculaceae</taxon>
        <taxon>Parvibaculum</taxon>
    </lineage>
</organism>
<dbReference type="EMBL" id="CP000774">
    <property type="protein sequence ID" value="ABS62870.1"/>
    <property type="molecule type" value="Genomic_DNA"/>
</dbReference>
<dbReference type="RefSeq" id="WP_012110138.1">
    <property type="nucleotide sequence ID" value="NC_009719.1"/>
</dbReference>
<dbReference type="SMR" id="A7HSI7"/>
<dbReference type="STRING" id="402881.Plav_1250"/>
<dbReference type="KEGG" id="pla:Plav_1250"/>
<dbReference type="eggNOG" id="COG1952">
    <property type="taxonomic scope" value="Bacteria"/>
</dbReference>
<dbReference type="HOGENOM" id="CLU_111574_0_0_5"/>
<dbReference type="OrthoDB" id="9795145at2"/>
<dbReference type="Proteomes" id="UP000006377">
    <property type="component" value="Chromosome"/>
</dbReference>
<dbReference type="GO" id="GO:0005737">
    <property type="term" value="C:cytoplasm"/>
    <property type="evidence" value="ECO:0007669"/>
    <property type="project" value="UniProtKB-SubCell"/>
</dbReference>
<dbReference type="GO" id="GO:0051082">
    <property type="term" value="F:unfolded protein binding"/>
    <property type="evidence" value="ECO:0007669"/>
    <property type="project" value="InterPro"/>
</dbReference>
<dbReference type="GO" id="GO:0006457">
    <property type="term" value="P:protein folding"/>
    <property type="evidence" value="ECO:0007669"/>
    <property type="project" value="UniProtKB-UniRule"/>
</dbReference>
<dbReference type="GO" id="GO:0051262">
    <property type="term" value="P:protein tetramerization"/>
    <property type="evidence" value="ECO:0007669"/>
    <property type="project" value="InterPro"/>
</dbReference>
<dbReference type="GO" id="GO:0015031">
    <property type="term" value="P:protein transport"/>
    <property type="evidence" value="ECO:0007669"/>
    <property type="project" value="UniProtKB-UniRule"/>
</dbReference>
<dbReference type="Gene3D" id="3.10.420.10">
    <property type="entry name" value="SecB-like"/>
    <property type="match status" value="1"/>
</dbReference>
<dbReference type="HAMAP" id="MF_00821">
    <property type="entry name" value="SecB"/>
    <property type="match status" value="1"/>
</dbReference>
<dbReference type="InterPro" id="IPR003708">
    <property type="entry name" value="SecB"/>
</dbReference>
<dbReference type="InterPro" id="IPR035958">
    <property type="entry name" value="SecB-like_sf"/>
</dbReference>
<dbReference type="NCBIfam" id="NF004392">
    <property type="entry name" value="PRK05751.1-3"/>
    <property type="match status" value="1"/>
</dbReference>
<dbReference type="NCBIfam" id="TIGR00809">
    <property type="entry name" value="secB"/>
    <property type="match status" value="1"/>
</dbReference>
<dbReference type="PANTHER" id="PTHR36918">
    <property type="match status" value="1"/>
</dbReference>
<dbReference type="PANTHER" id="PTHR36918:SF1">
    <property type="entry name" value="PROTEIN-EXPORT PROTEIN SECB"/>
    <property type="match status" value="1"/>
</dbReference>
<dbReference type="Pfam" id="PF02556">
    <property type="entry name" value="SecB"/>
    <property type="match status" value="1"/>
</dbReference>
<dbReference type="PRINTS" id="PR01594">
    <property type="entry name" value="SECBCHAPRONE"/>
</dbReference>
<dbReference type="SUPFAM" id="SSF54611">
    <property type="entry name" value="SecB-like"/>
    <property type="match status" value="1"/>
</dbReference>
<accession>A7HSI7</accession>
<gene>
    <name evidence="1" type="primary">secB</name>
    <name type="ordered locus">Plav_1250</name>
</gene>
<proteinExistence type="inferred from homology"/>
<comment type="function">
    <text evidence="1">One of the proteins required for the normal export of preproteins out of the cell cytoplasm. It is a molecular chaperone that binds to a subset of precursor proteins, maintaining them in a translocation-competent state. It also specifically binds to its receptor SecA.</text>
</comment>
<comment type="subunit">
    <text evidence="1">Homotetramer, a dimer of dimers. One homotetramer interacts with 1 SecA dimer.</text>
</comment>
<comment type="subcellular location">
    <subcellularLocation>
        <location evidence="1">Cytoplasm</location>
    </subcellularLocation>
</comment>
<comment type="similarity">
    <text evidence="1">Belongs to the SecB family.</text>
</comment>
<keyword id="KW-0143">Chaperone</keyword>
<keyword id="KW-0963">Cytoplasm</keyword>
<keyword id="KW-0653">Protein transport</keyword>
<keyword id="KW-1185">Reference proteome</keyword>
<keyword id="KW-0811">Translocation</keyword>
<keyword id="KW-0813">Transport</keyword>
<protein>
    <recommendedName>
        <fullName evidence="1">Protein-export protein SecB</fullName>
    </recommendedName>
</protein>
<feature type="chain" id="PRO_0000318253" description="Protein-export protein SecB">
    <location>
        <begin position="1"/>
        <end position="168"/>
    </location>
</feature>
<feature type="region of interest" description="Disordered" evidence="2">
    <location>
        <begin position="1"/>
        <end position="22"/>
    </location>
</feature>
<feature type="compositionally biased region" description="Polar residues" evidence="2">
    <location>
        <begin position="1"/>
        <end position="10"/>
    </location>
</feature>
<evidence type="ECO:0000255" key="1">
    <source>
        <dbReference type="HAMAP-Rule" id="MF_00821"/>
    </source>
</evidence>
<evidence type="ECO:0000256" key="2">
    <source>
        <dbReference type="SAM" id="MobiDB-lite"/>
    </source>
</evidence>
<reference key="1">
    <citation type="journal article" date="2011" name="Stand. Genomic Sci.">
        <title>Complete genome sequence of Parvibaculum lavamentivorans type strain (DS-1(T)).</title>
        <authorList>
            <person name="Schleheck D."/>
            <person name="Weiss M."/>
            <person name="Pitluck S."/>
            <person name="Bruce D."/>
            <person name="Land M.L."/>
            <person name="Han S."/>
            <person name="Saunders E."/>
            <person name="Tapia R."/>
            <person name="Detter C."/>
            <person name="Brettin T."/>
            <person name="Han J."/>
            <person name="Woyke T."/>
            <person name="Goodwin L."/>
            <person name="Pennacchio L."/>
            <person name="Nolan M."/>
            <person name="Cook A.M."/>
            <person name="Kjelleberg S."/>
            <person name="Thomas T."/>
        </authorList>
    </citation>
    <scope>NUCLEOTIDE SEQUENCE [LARGE SCALE GENOMIC DNA]</scope>
    <source>
        <strain>DS-1 / DSM 13023 / NCIMB 13966</strain>
    </source>
</reference>
<name>SECB_PARL1</name>
<sequence>MSDQGTNNGESGNGGAQNGEAPQLRVLTQYVKDLSFENPNAPQSLGPADEQPSINVRVDVGVKRMSATDFEVALKIGAEATVKDKAMFLVELDYAGLFRVVNVPEQDLEAVLVIECPRQIFPFARRILADTTRDGGFPPLMIDPIDFVGLYNQRHQQAPDAAAAAKPN</sequence>